<organism>
    <name type="scientific">Saccharolobus shibatae (strain ATCC 51178 / DSM 5389 / JCM 8931 / NBRC 15437 / B12)</name>
    <name type="common">Sulfolobus shibatae</name>
    <dbReference type="NCBI Taxonomy" id="523848"/>
    <lineage>
        <taxon>Archaea</taxon>
        <taxon>Thermoproteota</taxon>
        <taxon>Thermoprotei</taxon>
        <taxon>Sulfolobales</taxon>
        <taxon>Sulfolobaceae</taxon>
        <taxon>Saccharolobus</taxon>
    </lineage>
</organism>
<reference evidence="12 13" key="1">
    <citation type="journal article" date="2009" name="PLoS Biol.">
        <title>Evolution of complex RNA polymerases: the complete archaeal RNA polymerase structure.</title>
        <authorList>
            <person name="Korkhin Y."/>
            <person name="Unligil U.M."/>
            <person name="Littlefield O."/>
            <person name="Nelson P.J."/>
            <person name="Stuart D.I."/>
            <person name="Sigler P.B."/>
            <person name="Bell S.D."/>
            <person name="Abrescia N.G."/>
        </authorList>
    </citation>
    <scope>NUCLEOTIDE SEQUENCE [GENOMIC DNA]</scope>
    <scope>X-RAY CRYSTALLOGRAPHY (3.52 ANGSTROMS) OF THE RNA POLYMERASE COMPLEX</scope>
    <scope>FUNCTION</scope>
    <scope>SUBUNIT</scope>
    <scope>NOMENCLATURE</scope>
    <source>
        <strain>ATCC 51178 / DSM 5389 / JCM 8931 / NBRC 15437 / B12</strain>
    </source>
</reference>
<reference evidence="11" key="2">
    <citation type="journal article" date="2021" name="Environ. Microbiol.">
        <title>New insights into the diversity and evolution of the archaeal mobilome from three complete genomes of Saccharolobus shibatae.</title>
        <authorList>
            <person name="Medvedeva S."/>
            <person name="Brandt D."/>
            <person name="Cvirkaite-Krupovic V."/>
            <person name="Liu Y."/>
            <person name="Severinov K."/>
            <person name="Ishino S."/>
            <person name="Ishino Y."/>
            <person name="Prangishvili D."/>
            <person name="Kalinowski J."/>
            <person name="Krupovic M."/>
        </authorList>
    </citation>
    <scope>NUCLEOTIDE SEQUENCE [LARGE SCALE GENOMIC DNA]</scope>
    <source>
        <strain>ATCC 51178 / DSM 5389 / JCM 8931 / NBRC 15437 / B12</strain>
    </source>
</reference>
<reference evidence="14" key="3">
    <citation type="journal article" date="2011" name="Biochem. Soc. Trans.">
        <title>Archaeal RNA polymerase: the influence of the protruding stalk in crystal packing and preliminary biophysical analysis of the Rpo13 subunit.</title>
        <authorList>
            <person name="Wojtas M."/>
            <person name="Peralta B."/>
            <person name="Ondiviela M."/>
            <person name="Mogni M."/>
            <person name="Bell S.D."/>
            <person name="Abrescia N.G."/>
        </authorList>
    </citation>
    <scope>X-RAY CRYSTALLOGRAPHY (3.80 ANGSTROMS) OF THE RNA POLYMERASE COMPLEX</scope>
    <scope>FUNCTION</scope>
    <scope>SUBUNIT</scope>
    <source>
        <strain>ATCC 51178 / DSM 5389 / JCM 8931 / NBRC 15437 / B12</strain>
    </source>
</reference>
<reference evidence="15 16" key="4">
    <citation type="journal article" date="2012" name="Nucleic Acids Res.">
        <title>Structural and functional analyses of the interaction of archaeal RNA polymerase with DNA.</title>
        <authorList>
            <person name="Wojtas M.N."/>
            <person name="Mogni M."/>
            <person name="Millet O."/>
            <person name="Bell S.D."/>
            <person name="Abrescia N.G."/>
        </authorList>
    </citation>
    <scope>X-RAY CRYSTALLOGRAPHY (3.20 ANGSTROMS) OF THE RNA POLYMERASE COMPLEX WITH AND WITHOUT DNA</scope>
    <scope>SUBUNIT</scope>
    <scope>SUBCELLULAR LOCATION</scope>
    <scope>DOMAIN</scope>
    <scope>DNA-BINDING</scope>
    <scope>MUTAGENESIS OF 1-MET--PHE-33 AND 81-ARG--GLY-104</scope>
    <source>
        <strain>ATCC 51178 / DSM 5389 / JCM 8931 / NBRC 15437 / B12</strain>
    </source>
</reference>
<feature type="chain" id="PRO_0000453788" description="DNA-directed RNA polymerase subunit Rpo13">
    <location>
        <begin position="1"/>
        <end position="104"/>
    </location>
</feature>
<feature type="region of interest" description="Disordered" evidence="2">
    <location>
        <begin position="1"/>
        <end position="34"/>
    </location>
</feature>
<feature type="region of interest" description="Disordered" evidence="2">
    <location>
        <begin position="76"/>
        <end position="104"/>
    </location>
</feature>
<feature type="region of interest" description="Required to bind DNA" evidence="5">
    <location>
        <begin position="81"/>
        <end position="104"/>
    </location>
</feature>
<feature type="compositionally biased region" description="Acidic residues" evidence="2">
    <location>
        <begin position="7"/>
        <end position="31"/>
    </location>
</feature>
<feature type="compositionally biased region" description="Basic residues" evidence="2">
    <location>
        <begin position="80"/>
        <end position="104"/>
    </location>
</feature>
<feature type="binding site" evidence="10">
    <location>
        <position position="32"/>
    </location>
    <ligand>
        <name>DNA</name>
        <dbReference type="ChEBI" id="CHEBI:16991"/>
        <note>template DNA</note>
    </ligand>
</feature>
<feature type="mutagenesis site" description="Decreased stability, still binds DNA." evidence="5">
    <location>
        <begin position="1"/>
        <end position="33"/>
    </location>
</feature>
<feature type="mutagenesis site" description="Protein is stable, no longer binds DNA." evidence="5">
    <location>
        <begin position="81"/>
        <end position="104"/>
    </location>
</feature>
<feature type="helix" evidence="18">
    <location>
        <begin position="38"/>
        <end position="56"/>
    </location>
</feature>
<feature type="strand" evidence="17">
    <location>
        <begin position="58"/>
        <end position="60"/>
    </location>
</feature>
<feature type="helix" evidence="18">
    <location>
        <begin position="61"/>
        <end position="81"/>
    </location>
</feature>
<dbReference type="EC" id="2.7.7.6" evidence="1"/>
<dbReference type="EMBL" id="FJ515677">
    <property type="protein sequence ID" value="ACL36500.1"/>
    <property type="molecule type" value="Genomic_DNA"/>
</dbReference>
<dbReference type="EMBL" id="CP077717">
    <property type="protein sequence ID" value="QXJ30148.1"/>
    <property type="molecule type" value="Genomic_DNA"/>
</dbReference>
<dbReference type="PDB" id="2WAQ">
    <property type="method" value="X-ray"/>
    <property type="resolution" value="3.35 A"/>
    <property type="chains" value="Q=38-82"/>
</dbReference>
<dbReference type="PDB" id="2WB1">
    <property type="method" value="X-ray"/>
    <property type="resolution" value="3.52 A"/>
    <property type="chains" value="J/Q=1-104"/>
</dbReference>
<dbReference type="PDB" id="2Y0S">
    <property type="method" value="X-ray"/>
    <property type="resolution" value="3.80 A"/>
    <property type="chains" value="J/Q=1-104"/>
</dbReference>
<dbReference type="PDB" id="4AYB">
    <property type="method" value="X-ray"/>
    <property type="resolution" value="3.20 A"/>
    <property type="chains" value="Q=1-104"/>
</dbReference>
<dbReference type="PDB" id="4V8S">
    <property type="method" value="X-ray"/>
    <property type="resolution" value="4.32 A"/>
    <property type="chains" value="AJ/BQ=1-104"/>
</dbReference>
<dbReference type="PDBsum" id="2WAQ"/>
<dbReference type="PDBsum" id="2WB1"/>
<dbReference type="PDBsum" id="2Y0S"/>
<dbReference type="PDBsum" id="4AYB"/>
<dbReference type="PDBsum" id="4V8S"/>
<dbReference type="SMR" id="B8YB65"/>
<dbReference type="KEGG" id="sshi:J5U23_03039"/>
<dbReference type="OrthoDB" id="44217at2157"/>
<dbReference type="BRENDA" id="2.7.7.6">
    <property type="organism ID" value="6162"/>
</dbReference>
<dbReference type="EvolutionaryTrace" id="B8YB65"/>
<dbReference type="Proteomes" id="UP000694018">
    <property type="component" value="Chromosome"/>
</dbReference>
<dbReference type="GO" id="GO:0005737">
    <property type="term" value="C:cytoplasm"/>
    <property type="evidence" value="ECO:0007669"/>
    <property type="project" value="UniProtKB-SubCell"/>
</dbReference>
<dbReference type="GO" id="GO:0000428">
    <property type="term" value="C:DNA-directed RNA polymerase complex"/>
    <property type="evidence" value="ECO:0000314"/>
    <property type="project" value="UniProtKB"/>
</dbReference>
<dbReference type="GO" id="GO:0003677">
    <property type="term" value="F:DNA binding"/>
    <property type="evidence" value="ECO:0007669"/>
    <property type="project" value="UniProtKB-KW"/>
</dbReference>
<dbReference type="GO" id="GO:0016779">
    <property type="term" value="F:nucleotidyltransferase activity"/>
    <property type="evidence" value="ECO:0007669"/>
    <property type="project" value="UniProtKB-KW"/>
</dbReference>
<dbReference type="GO" id="GO:0070063">
    <property type="term" value="F:RNA polymerase binding"/>
    <property type="evidence" value="ECO:0000269"/>
    <property type="project" value="DisProt"/>
</dbReference>
<dbReference type="DisProt" id="DP01001"/>
<dbReference type="Gene3D" id="6.20.450.10">
    <property type="match status" value="1"/>
</dbReference>
<dbReference type="InterPro" id="IPR021985">
    <property type="entry name" value="RNA_pol_Rpo13"/>
</dbReference>
<dbReference type="Pfam" id="PF12136">
    <property type="entry name" value="RNA_pol_Rpo13"/>
    <property type="match status" value="1"/>
</dbReference>
<keyword id="KW-0002">3D-structure</keyword>
<keyword id="KW-0963">Cytoplasm</keyword>
<keyword id="KW-0238">DNA-binding</keyword>
<keyword id="KW-0240">DNA-directed RNA polymerase</keyword>
<keyword id="KW-0548">Nucleotidyltransferase</keyword>
<keyword id="KW-0804">Transcription</keyword>
<keyword id="KW-0808">Transferase</keyword>
<gene>
    <name evidence="6" type="primary">rpo13</name>
    <name evidence="11" type="ORF">J5U23_03039</name>
</gene>
<sequence>MVSGMSTEEEKEGTNDEEVSEEREVEETSEEEFPKLSIQDIELLMKNTEIWDNLLNGKISVDEAKRLFEDNYKDYEKRDSRRKAKKAASKKVKKTKKKEKSVEG</sequence>
<proteinExistence type="evidence at protein level"/>
<protein>
    <recommendedName>
        <fullName evidence="6">DNA-directed RNA polymerase subunit Rpo13</fullName>
        <ecNumber evidence="1">2.7.7.6</ecNumber>
    </recommendedName>
</protein>
<comment type="function">
    <text evidence="5 8 9 10">DNA-dependent RNA polymerase (RNAP) catalyzes the transcription of DNA into RNA using the four ribonucleoside triphosphates as substrates (Probable). A molten-globule protein, it binds dsDNA in the RNAP, in vitro binds dsDNA but not ssDNA (Probable) (PubMed:22848102). Its position in RNAP implies it functions in both transcription initiation and elongation (Probable).</text>
</comment>
<comment type="catalytic activity">
    <reaction evidence="1">
        <text>RNA(n) + a ribonucleoside 5'-triphosphate = RNA(n+1) + diphosphate</text>
        <dbReference type="Rhea" id="RHEA:21248"/>
        <dbReference type="Rhea" id="RHEA-COMP:14527"/>
        <dbReference type="Rhea" id="RHEA-COMP:17342"/>
        <dbReference type="ChEBI" id="CHEBI:33019"/>
        <dbReference type="ChEBI" id="CHEBI:61557"/>
        <dbReference type="ChEBI" id="CHEBI:140395"/>
        <dbReference type="EC" id="2.7.7.6"/>
    </reaction>
</comment>
<comment type="subunit">
    <text evidence="3 4 5">Part of the 13-subunit RNA polymerase complex. Rpo1N and Rpo5 form a cleft which docks Rpo13 (PubMed:19419240, PubMed:21265742, PubMed:22848102). Forms predominantly dimers in solution, although monomers and trimers can also be seen (PubMed:21265742, PubMed:22848102). Found associated with RNAP but also as a homodimer pool in the cytoplasm in vivo (PubMed:22848102).</text>
</comment>
<comment type="subcellular location">
    <subcellularLocation>
        <location evidence="5">Cytoplasm</location>
    </subcellularLocation>
</comment>
<comment type="domain">
    <text evidence="5">Forms a helix-turn-helix motif with helix 1 (residues 38-56) nearly parallel to helix 2 (residues 61-82); helix 1 contacts both Rpo5 and Rpo1N. The C-terminal region (residues 81-104) is required for DNA-binding.</text>
</comment>
<comment type="similarity">
    <text evidence="7">Belongs to the archaeal Rpo13 RNA polymerase subunit family.</text>
</comment>
<name>RPO13_SACSH</name>
<accession>B8YB65</accession>
<accession>A0A8F5GUL2</accession>
<evidence type="ECO:0000250" key="1">
    <source>
        <dbReference type="UniProtKB" id="Q4JAJ6"/>
    </source>
</evidence>
<evidence type="ECO:0000256" key="2">
    <source>
        <dbReference type="SAM" id="MobiDB-lite"/>
    </source>
</evidence>
<evidence type="ECO:0000269" key="3">
    <source>
    </source>
</evidence>
<evidence type="ECO:0000269" key="4">
    <source>
    </source>
</evidence>
<evidence type="ECO:0000269" key="5">
    <source>
    </source>
</evidence>
<evidence type="ECO:0000303" key="6">
    <source>
    </source>
</evidence>
<evidence type="ECO:0000305" key="7"/>
<evidence type="ECO:0000305" key="8">
    <source>
    </source>
</evidence>
<evidence type="ECO:0000305" key="9">
    <source>
    </source>
</evidence>
<evidence type="ECO:0000305" key="10">
    <source>
    </source>
</evidence>
<evidence type="ECO:0000312" key="11">
    <source>
        <dbReference type="EMBL" id="QXJ30148.1"/>
    </source>
</evidence>
<evidence type="ECO:0007744" key="12">
    <source>
        <dbReference type="PDB" id="2WAQ"/>
    </source>
</evidence>
<evidence type="ECO:0007744" key="13">
    <source>
        <dbReference type="PDB" id="2WB1"/>
    </source>
</evidence>
<evidence type="ECO:0007744" key="14">
    <source>
        <dbReference type="PDB" id="2Y0S"/>
    </source>
</evidence>
<evidence type="ECO:0007744" key="15">
    <source>
        <dbReference type="PDB" id="4AYB"/>
    </source>
</evidence>
<evidence type="ECO:0007744" key="16">
    <source>
        <dbReference type="PDB" id="4V8S"/>
    </source>
</evidence>
<evidence type="ECO:0007829" key="17">
    <source>
        <dbReference type="PDB" id="2WAQ"/>
    </source>
</evidence>
<evidence type="ECO:0007829" key="18">
    <source>
        <dbReference type="PDB" id="4AYB"/>
    </source>
</evidence>